<dbReference type="EC" id="2.7.4.1" evidence="1 2"/>
<dbReference type="EMBL" id="AB007598">
    <property type="protein sequence ID" value="BAA22565.1"/>
    <property type="status" value="ALT_INIT"/>
    <property type="molecule type" value="Genomic_DNA"/>
</dbReference>
<dbReference type="EMBL" id="AE004091">
    <property type="protein sequence ID" value="AAG08627.1"/>
    <property type="status" value="ALT_INIT"/>
    <property type="molecule type" value="Genomic_DNA"/>
</dbReference>
<dbReference type="PIR" id="JE0187">
    <property type="entry name" value="JE0187"/>
</dbReference>
<dbReference type="RefSeq" id="NP_253929.1">
    <property type="nucleotide sequence ID" value="NC_002516.2"/>
</dbReference>
<dbReference type="SMR" id="P0DP44"/>
<dbReference type="FunCoup" id="P0DP44">
    <property type="interactions" value="300"/>
</dbReference>
<dbReference type="STRING" id="208964.PA5242"/>
<dbReference type="PaxDb" id="208964-PA5242"/>
<dbReference type="GeneID" id="879700"/>
<dbReference type="KEGG" id="pae:PA5242"/>
<dbReference type="HOGENOM" id="CLU_009678_5_0_6"/>
<dbReference type="InParanoid" id="P0DP44"/>
<dbReference type="OrthoDB" id="9761456at2"/>
<dbReference type="Proteomes" id="UP000002438">
    <property type="component" value="Chromosome"/>
</dbReference>
<dbReference type="GO" id="GO:0016020">
    <property type="term" value="C:membrane"/>
    <property type="evidence" value="ECO:0000318"/>
    <property type="project" value="GO_Central"/>
</dbReference>
<dbReference type="GO" id="GO:0009358">
    <property type="term" value="C:polyphosphate kinase complex"/>
    <property type="evidence" value="ECO:0007669"/>
    <property type="project" value="InterPro"/>
</dbReference>
<dbReference type="GO" id="GO:0005524">
    <property type="term" value="F:ATP binding"/>
    <property type="evidence" value="ECO:0007669"/>
    <property type="project" value="UniProtKB-KW"/>
</dbReference>
<dbReference type="GO" id="GO:0046872">
    <property type="term" value="F:metal ion binding"/>
    <property type="evidence" value="ECO:0007669"/>
    <property type="project" value="UniProtKB-KW"/>
</dbReference>
<dbReference type="GO" id="GO:0008976">
    <property type="term" value="F:polyphosphate kinase activity"/>
    <property type="evidence" value="ECO:0000318"/>
    <property type="project" value="GO_Central"/>
</dbReference>
<dbReference type="GO" id="GO:0006799">
    <property type="term" value="P:polyphosphate biosynthetic process"/>
    <property type="evidence" value="ECO:0000318"/>
    <property type="project" value="GO_Central"/>
</dbReference>
<dbReference type="CDD" id="cd09165">
    <property type="entry name" value="PLDc_PaPPK1_C1_like"/>
    <property type="match status" value="1"/>
</dbReference>
<dbReference type="CDD" id="cd09168">
    <property type="entry name" value="PLDc_PaPPK1_C2_like"/>
    <property type="match status" value="1"/>
</dbReference>
<dbReference type="Gene3D" id="3.30.870.10">
    <property type="entry name" value="Endonuclease Chain A"/>
    <property type="match status" value="2"/>
</dbReference>
<dbReference type="Gene3D" id="3.30.1840.10">
    <property type="entry name" value="Polyphosphate kinase middle domain"/>
    <property type="match status" value="1"/>
</dbReference>
<dbReference type="Gene3D" id="1.20.58.310">
    <property type="entry name" value="Polyphosphate kinase N-terminal domain"/>
    <property type="match status" value="1"/>
</dbReference>
<dbReference type="HAMAP" id="MF_00347">
    <property type="entry name" value="Polyphosphate_kinase"/>
    <property type="match status" value="1"/>
</dbReference>
<dbReference type="InterPro" id="IPR003414">
    <property type="entry name" value="PP_kinase"/>
</dbReference>
<dbReference type="InterPro" id="IPR041108">
    <property type="entry name" value="PP_kinase_C_1"/>
</dbReference>
<dbReference type="InterPro" id="IPR024953">
    <property type="entry name" value="PP_kinase_middle"/>
</dbReference>
<dbReference type="InterPro" id="IPR036830">
    <property type="entry name" value="PP_kinase_middle_dom_sf"/>
</dbReference>
<dbReference type="InterPro" id="IPR025200">
    <property type="entry name" value="PPK_C_dom2"/>
</dbReference>
<dbReference type="InterPro" id="IPR025198">
    <property type="entry name" value="PPK_N_dom"/>
</dbReference>
<dbReference type="InterPro" id="IPR036832">
    <property type="entry name" value="PPK_N_dom_sf"/>
</dbReference>
<dbReference type="NCBIfam" id="TIGR03705">
    <property type="entry name" value="poly_P_kin"/>
    <property type="match status" value="1"/>
</dbReference>
<dbReference type="NCBIfam" id="NF003917">
    <property type="entry name" value="PRK05443.1-1"/>
    <property type="match status" value="1"/>
</dbReference>
<dbReference type="NCBIfam" id="NF003918">
    <property type="entry name" value="PRK05443.1-2"/>
    <property type="match status" value="1"/>
</dbReference>
<dbReference type="NCBIfam" id="NF003921">
    <property type="entry name" value="PRK05443.2-2"/>
    <property type="match status" value="1"/>
</dbReference>
<dbReference type="PANTHER" id="PTHR30218">
    <property type="entry name" value="POLYPHOSPHATE KINASE"/>
    <property type="match status" value="1"/>
</dbReference>
<dbReference type="PANTHER" id="PTHR30218:SF0">
    <property type="entry name" value="POLYPHOSPHATE KINASE"/>
    <property type="match status" value="1"/>
</dbReference>
<dbReference type="Pfam" id="PF02503">
    <property type="entry name" value="PP_kinase"/>
    <property type="match status" value="1"/>
</dbReference>
<dbReference type="Pfam" id="PF13090">
    <property type="entry name" value="PP_kinase_C"/>
    <property type="match status" value="1"/>
</dbReference>
<dbReference type="Pfam" id="PF17941">
    <property type="entry name" value="PP_kinase_C_1"/>
    <property type="match status" value="1"/>
</dbReference>
<dbReference type="Pfam" id="PF13089">
    <property type="entry name" value="PP_kinase_N"/>
    <property type="match status" value="1"/>
</dbReference>
<dbReference type="PIRSF" id="PIRSF015589">
    <property type="entry name" value="PP_kinase"/>
    <property type="match status" value="1"/>
</dbReference>
<dbReference type="SUPFAM" id="SSF56024">
    <property type="entry name" value="Phospholipase D/nuclease"/>
    <property type="match status" value="2"/>
</dbReference>
<dbReference type="SUPFAM" id="SSF143724">
    <property type="entry name" value="PHP14-like"/>
    <property type="match status" value="1"/>
</dbReference>
<dbReference type="SUPFAM" id="SSF140356">
    <property type="entry name" value="PPK N-terminal domain-like"/>
    <property type="match status" value="1"/>
</dbReference>
<gene>
    <name evidence="1 3" type="primary">ppk</name>
    <name type="ordered locus">PA5242</name>
</gene>
<accession>P0DP44</accession>
<accession>O24816</accession>
<accession>Q9S646</accession>
<proteinExistence type="evidence at protein level"/>
<reference key="1">
    <citation type="journal article" date="1998" name="DNA Res.">
        <title>The polyphosphate kinase gene of Pseudomonas aeruginosa.</title>
        <authorList>
            <person name="Ishige K."/>
            <person name="Kameda A."/>
            <person name="Noguchi T."/>
            <person name="Shiba T."/>
        </authorList>
    </citation>
    <scope>NUCLEOTIDE SEQUENCE [GENOMIC DNA]</scope>
    <scope>FUNCTION</scope>
    <scope>CATALYTIC ACTIVITY</scope>
    <source>
        <strain>ATCC 15692 / DSM 22644 / CIP 104116 / JCM 14847 / LMG 12228 / 1C / PRS 101 / PAO1</strain>
    </source>
</reference>
<reference key="2">
    <citation type="journal article" date="2000" name="Nature">
        <title>Complete genome sequence of Pseudomonas aeruginosa PAO1, an opportunistic pathogen.</title>
        <authorList>
            <person name="Stover C.K."/>
            <person name="Pham X.-Q.T."/>
            <person name="Erwin A.L."/>
            <person name="Mizoguchi S.D."/>
            <person name="Warrener P."/>
            <person name="Hickey M.J."/>
            <person name="Brinkman F.S.L."/>
            <person name="Hufnagle W.O."/>
            <person name="Kowalik D.J."/>
            <person name="Lagrou M."/>
            <person name="Garber R.L."/>
            <person name="Goltry L."/>
            <person name="Tolentino E."/>
            <person name="Westbrock-Wadman S."/>
            <person name="Yuan Y."/>
            <person name="Brody L.L."/>
            <person name="Coulter S.N."/>
            <person name="Folger K.R."/>
            <person name="Kas A."/>
            <person name="Larbig K."/>
            <person name="Lim R.M."/>
            <person name="Smith K.A."/>
            <person name="Spencer D.H."/>
            <person name="Wong G.K.-S."/>
            <person name="Wu Z."/>
            <person name="Paulsen I.T."/>
            <person name="Reizer J."/>
            <person name="Saier M.H. Jr."/>
            <person name="Hancock R.E.W."/>
            <person name="Lory S."/>
            <person name="Olson M.V."/>
        </authorList>
    </citation>
    <scope>NUCLEOTIDE SEQUENCE [LARGE SCALE GENOMIC DNA]</scope>
    <source>
        <strain>ATCC 15692 / DSM 22644 / CIP 104116 / JCM 14847 / LMG 12228 / 1C / PRS 101 / PAO1</strain>
    </source>
</reference>
<name>PPK1_PSEAE</name>
<evidence type="ECO:0000255" key="1">
    <source>
        <dbReference type="HAMAP-Rule" id="MF_00347"/>
    </source>
</evidence>
<evidence type="ECO:0000269" key="2">
    <source>
    </source>
</evidence>
<evidence type="ECO:0000303" key="3">
    <source>
    </source>
</evidence>
<evidence type="ECO:0000305" key="4"/>
<protein>
    <recommendedName>
        <fullName evidence="1 3">Polyphosphate kinase</fullName>
        <ecNumber evidence="1 2">2.7.4.1</ecNumber>
    </recommendedName>
    <alternativeName>
        <fullName evidence="1">ATP-polyphosphate phosphotransferase</fullName>
    </alternativeName>
    <alternativeName>
        <fullName evidence="1">Polyphosphoric acid kinase</fullName>
    </alternativeName>
</protein>
<feature type="chain" id="PRO_0000128652" description="Polyphosphate kinase">
    <location>
        <begin position="1"/>
        <end position="690"/>
    </location>
</feature>
<feature type="active site" description="Phosphohistidine intermediate" evidence="1">
    <location>
        <position position="435"/>
    </location>
</feature>
<feature type="binding site" evidence="1">
    <location>
        <position position="45"/>
    </location>
    <ligand>
        <name>ATP</name>
        <dbReference type="ChEBI" id="CHEBI:30616"/>
    </ligand>
</feature>
<feature type="binding site" evidence="1">
    <location>
        <position position="375"/>
    </location>
    <ligand>
        <name>Mg(2+)</name>
        <dbReference type="ChEBI" id="CHEBI:18420"/>
    </ligand>
</feature>
<feature type="binding site" evidence="1">
    <location>
        <position position="405"/>
    </location>
    <ligand>
        <name>Mg(2+)</name>
        <dbReference type="ChEBI" id="CHEBI:18420"/>
    </ligand>
</feature>
<feature type="binding site" evidence="1">
    <location>
        <position position="468"/>
    </location>
    <ligand>
        <name>ATP</name>
        <dbReference type="ChEBI" id="CHEBI:30616"/>
    </ligand>
</feature>
<feature type="binding site" evidence="1">
    <location>
        <position position="564"/>
    </location>
    <ligand>
        <name>ATP</name>
        <dbReference type="ChEBI" id="CHEBI:30616"/>
    </ligand>
</feature>
<feature type="binding site" evidence="1">
    <location>
        <position position="592"/>
    </location>
    <ligand>
        <name>ATP</name>
        <dbReference type="ChEBI" id="CHEBI:30616"/>
    </ligand>
</feature>
<sequence length="690" mass="78293">MDDSSLYIHRELSQLQFNIRVLEQALDESYPLLERLKFLLIFSSNLDEFFEIRIAGLKKQITFAREQAGADGLLPHQALARISELVHEQVSRQYRILNETLLPELAKHQIRFIRRRHWTLKIKTWVRRFFRDEIAPIITPIGLDPTHPFPLLVNKSLNFIVELEGMDAFGRDSGLAIIPAPRLLPRIIRLPEDVGGEGDNYVFLSSMIHAHADDLFPGMKVKGCYQFRLTRNADLSVDTEDVEDLARALRGELFSRRYGDAVRLEVVDTCPQNLTNYLLKQFGLSESELYKVSGPVNLTRLFSVTGLESHPELQYPPFTPAIPRLLQKKENLFNVLSKLDVLLMHPFESFTPVIDLLRQAAKDPNVLAIKQTLYRSGANSEIVDALVEAARNGKEVTAVIELRARFDEESNLQLASRLQQAGAVVIYGVVGFKTHAKMMLILRREDGELRRYAHLGTGNYHAGNARLYTDYSLLTADVALCEDLHKLFNQLIGMGKTLRMKKLLHAPFTLKKNLLEMINREAAQAALGQPAHIMAKVNSLTDPKVIRALYKASQAGVRIDLVVRGMCCLRPGIPGVSHNIHVRSIIGRFLEHSRIYYFLNGGDEKLYLSSADWMERNLDMRVETCFPVEGKKLVQRVKKELETYLTDNTQAWVLQADGSYQRLSPTGNQNPRNTQATLLEKLAAPVLTAR</sequence>
<organism>
    <name type="scientific">Pseudomonas aeruginosa (strain ATCC 15692 / DSM 22644 / CIP 104116 / JCM 14847 / LMG 12228 / 1C / PRS 101 / PAO1)</name>
    <dbReference type="NCBI Taxonomy" id="208964"/>
    <lineage>
        <taxon>Bacteria</taxon>
        <taxon>Pseudomonadati</taxon>
        <taxon>Pseudomonadota</taxon>
        <taxon>Gammaproteobacteria</taxon>
        <taxon>Pseudomonadales</taxon>
        <taxon>Pseudomonadaceae</taxon>
        <taxon>Pseudomonas</taxon>
    </lineage>
</organism>
<keyword id="KW-0067">ATP-binding</keyword>
<keyword id="KW-0418">Kinase</keyword>
<keyword id="KW-0460">Magnesium</keyword>
<keyword id="KW-0479">Metal-binding</keyword>
<keyword id="KW-0547">Nucleotide-binding</keyword>
<keyword id="KW-0597">Phosphoprotein</keyword>
<keyword id="KW-1185">Reference proteome</keyword>
<keyword id="KW-0808">Transferase</keyword>
<comment type="function">
    <text evidence="1 2">Catalyzes the reversible transfer of the terminal phosphate of ATP to form a long-chain polyphosphate (polyP).</text>
</comment>
<comment type="catalytic activity">
    <reaction evidence="1 2">
        <text>[phosphate](n) + ATP = [phosphate](n+1) + ADP</text>
        <dbReference type="Rhea" id="RHEA:19573"/>
        <dbReference type="Rhea" id="RHEA-COMP:9859"/>
        <dbReference type="Rhea" id="RHEA-COMP:14280"/>
        <dbReference type="ChEBI" id="CHEBI:16838"/>
        <dbReference type="ChEBI" id="CHEBI:30616"/>
        <dbReference type="ChEBI" id="CHEBI:456216"/>
        <dbReference type="EC" id="2.7.4.1"/>
    </reaction>
</comment>
<comment type="cofactor">
    <cofactor evidence="1">
        <name>Mg(2+)</name>
        <dbReference type="ChEBI" id="CHEBI:18420"/>
    </cofactor>
</comment>
<comment type="PTM">
    <text evidence="1">An intermediate of this reaction is the autophosphorylated ppk in which a phosphate is covalently linked to a histidine residue through a N-P bond.</text>
</comment>
<comment type="similarity">
    <text evidence="1">Belongs to the polyphosphate kinase 1 (PPK1) family.</text>
</comment>
<comment type="sequence caution" evidence="4">
    <conflict type="erroneous initiation">
        <sequence resource="EMBL-CDS" id="AAG08627"/>
    </conflict>
    <text>Extended N-terminus.</text>
</comment>
<comment type="sequence caution" evidence="4">
    <conflict type="erroneous initiation">
        <sequence resource="EMBL-CDS" id="BAA22565"/>
    </conflict>
    <text>Extended N-terminus.</text>
</comment>